<proteinExistence type="evidence at protein level"/>
<feature type="chain" id="PRO_0000097473" description="Chromatin structure-remodeling complex protein RSC58">
    <location>
        <begin position="1"/>
        <end position="502"/>
    </location>
</feature>
<feature type="domain" description="Bromo" evidence="1">
    <location>
        <begin position="19"/>
        <end position="134"/>
    </location>
</feature>
<feature type="region of interest" description="Disordered" evidence="2">
    <location>
        <begin position="336"/>
        <end position="378"/>
    </location>
</feature>
<feature type="compositionally biased region" description="Basic and acidic residues" evidence="2">
    <location>
        <begin position="339"/>
        <end position="353"/>
    </location>
</feature>
<feature type="helix" evidence="13">
    <location>
        <begin position="10"/>
        <end position="24"/>
    </location>
</feature>
<feature type="turn" evidence="13">
    <location>
        <begin position="25"/>
        <end position="28"/>
    </location>
</feature>
<feature type="helix" evidence="13">
    <location>
        <begin position="30"/>
        <end position="32"/>
    </location>
</feature>
<feature type="helix" evidence="13">
    <location>
        <begin position="44"/>
        <end position="46"/>
    </location>
</feature>
<feature type="helix" evidence="13">
    <location>
        <begin position="47"/>
        <end position="60"/>
    </location>
</feature>
<feature type="helix" evidence="13">
    <location>
        <begin position="76"/>
        <end position="81"/>
    </location>
</feature>
<feature type="helix" evidence="13">
    <location>
        <begin position="89"/>
        <end position="109"/>
    </location>
</feature>
<feature type="strand" evidence="13">
    <location>
        <begin position="112"/>
        <end position="114"/>
    </location>
</feature>
<feature type="helix" evidence="13">
    <location>
        <begin position="115"/>
        <end position="137"/>
    </location>
</feature>
<feature type="helix" evidence="13">
    <location>
        <begin position="171"/>
        <end position="179"/>
    </location>
</feature>
<feature type="strand" evidence="13">
    <location>
        <begin position="180"/>
        <end position="190"/>
    </location>
</feature>
<feature type="strand" evidence="13">
    <location>
        <begin position="192"/>
        <end position="198"/>
    </location>
</feature>
<feature type="strand" evidence="13">
    <location>
        <begin position="203"/>
        <end position="205"/>
    </location>
</feature>
<feature type="strand" evidence="13">
    <location>
        <begin position="227"/>
        <end position="231"/>
    </location>
</feature>
<feature type="helix" evidence="13">
    <location>
        <begin position="244"/>
        <end position="247"/>
    </location>
</feature>
<feature type="strand" evidence="13">
    <location>
        <begin position="264"/>
        <end position="267"/>
    </location>
</feature>
<feature type="strand" evidence="12">
    <location>
        <begin position="280"/>
        <end position="283"/>
    </location>
</feature>
<feature type="turn" evidence="13">
    <location>
        <begin position="285"/>
        <end position="287"/>
    </location>
</feature>
<feature type="helix" evidence="13">
    <location>
        <begin position="303"/>
        <end position="313"/>
    </location>
</feature>
<feature type="turn" evidence="13">
    <location>
        <begin position="314"/>
        <end position="316"/>
    </location>
</feature>
<feature type="helix" evidence="13">
    <location>
        <begin position="390"/>
        <end position="393"/>
    </location>
</feature>
<feature type="strand" evidence="12">
    <location>
        <begin position="398"/>
        <end position="402"/>
    </location>
</feature>
<feature type="helix" evidence="13">
    <location>
        <begin position="404"/>
        <end position="411"/>
    </location>
</feature>
<feature type="helix" evidence="13">
    <location>
        <begin position="416"/>
        <end position="435"/>
    </location>
</feature>
<feature type="helix" evidence="13">
    <location>
        <begin position="443"/>
        <end position="461"/>
    </location>
</feature>
<feature type="strand" evidence="12">
    <location>
        <begin position="478"/>
        <end position="480"/>
    </location>
</feature>
<organism>
    <name type="scientific">Saccharomyces cerevisiae (strain ATCC 204508 / S288c)</name>
    <name type="common">Baker's yeast</name>
    <dbReference type="NCBI Taxonomy" id="559292"/>
    <lineage>
        <taxon>Eukaryota</taxon>
        <taxon>Fungi</taxon>
        <taxon>Dikarya</taxon>
        <taxon>Ascomycota</taxon>
        <taxon>Saccharomycotina</taxon>
        <taxon>Saccharomycetes</taxon>
        <taxon>Saccharomycetales</taxon>
        <taxon>Saccharomycetaceae</taxon>
        <taxon>Saccharomyces</taxon>
    </lineage>
</organism>
<sequence length="502" mass="57794">MTESVGGNKLVDFLVNVQSILNAASVKCHVVDESFPAKFFEKNPDKIYESYCKFIKNRSNSEGLIRNEDKLVLTTINKRFENGEYEPIQGGFYKLYHDIKLVCTILIHFYPQGTRNYQLVDKFYKFSSELLLRECCRIGIALTQTNNIKSRSGKLLSGNEMDEYDDDDATELDKIISYDFIKISMNYTVPISQTYQIRTKDMDLFSSIISKSNLDKRPHELPNTNFKINNVLPQTDIENEAPRLGFVGANTSNIPDPTLPPTEMMTRFLHPNWYALPTTVWLKYGNYNSWAPSFNENGTVVDSTTRGLIWLERIGYMDLYEKNEKKVKQEELLNTNEEGINRKQNDENNKNVDGKSNGVQDDGGDNDNDATIASANSESTENKEQFIIKLQNLYNWTPSNYIGDDEIENFRNGTPDKLVSDSLLKLKRLRKERILNKVLKPTTEERELYFKVKRILKEVILAKKVSKVPINNVRAFPVLQTNYNGSIPVVRAQPGRKRKHKK</sequence>
<keyword id="KW-0002">3D-structure</keyword>
<keyword id="KW-0103">Bromodomain</keyword>
<keyword id="KW-0156">Chromatin regulator</keyword>
<keyword id="KW-0539">Nucleus</keyword>
<keyword id="KW-1185">Reference proteome</keyword>
<keyword id="KW-0804">Transcription</keyword>
<keyword id="KW-0805">Transcription regulation</keyword>
<protein>
    <recommendedName>
        <fullName>Chromatin structure-remodeling complex protein RSC58</fullName>
    </recommendedName>
    <alternativeName>
        <fullName>Remodel the structure of chromatin complex subunit 58</fullName>
    </alternativeName>
</protein>
<accession>Q07979</accession>
<accession>D6VY35</accession>
<name>RSC58_YEAST</name>
<reference evidence="11" key="1">
    <citation type="journal article" date="1997" name="Nature">
        <title>The nucleotide sequence of Saccharomyces cerevisiae chromosome XII.</title>
        <authorList>
            <person name="Johnston M."/>
            <person name="Hillier L.W."/>
            <person name="Riles L."/>
            <person name="Albermann K."/>
            <person name="Andre B."/>
            <person name="Ansorge W."/>
            <person name="Benes V."/>
            <person name="Brueckner M."/>
            <person name="Delius H."/>
            <person name="Dubois E."/>
            <person name="Duesterhoeft A."/>
            <person name="Entian K.-D."/>
            <person name="Floeth M."/>
            <person name="Goffeau A."/>
            <person name="Hebling U."/>
            <person name="Heumann K."/>
            <person name="Heuss-Neitzel D."/>
            <person name="Hilbert H."/>
            <person name="Hilger F."/>
            <person name="Kleine K."/>
            <person name="Koetter P."/>
            <person name="Louis E.J."/>
            <person name="Messenguy F."/>
            <person name="Mewes H.-W."/>
            <person name="Miosga T."/>
            <person name="Moestl D."/>
            <person name="Mueller-Auer S."/>
            <person name="Nentwich U."/>
            <person name="Obermaier B."/>
            <person name="Piravandi E."/>
            <person name="Pohl T.M."/>
            <person name="Portetelle D."/>
            <person name="Purnelle B."/>
            <person name="Rechmann S."/>
            <person name="Rieger M."/>
            <person name="Rinke M."/>
            <person name="Rose M."/>
            <person name="Scharfe M."/>
            <person name="Scherens B."/>
            <person name="Scholler P."/>
            <person name="Schwager C."/>
            <person name="Schwarz S."/>
            <person name="Underwood A.P."/>
            <person name="Urrestarazu L.A."/>
            <person name="Vandenbol M."/>
            <person name="Verhasselt P."/>
            <person name="Vierendeels F."/>
            <person name="Voet M."/>
            <person name="Volckaert G."/>
            <person name="Voss H."/>
            <person name="Wambutt R."/>
            <person name="Wedler E."/>
            <person name="Wedler H."/>
            <person name="Zimmermann F.K."/>
            <person name="Zollner A."/>
            <person name="Hani J."/>
            <person name="Hoheisel J.D."/>
        </authorList>
    </citation>
    <scope>NUCLEOTIDE SEQUENCE [LARGE SCALE GENOMIC DNA]</scope>
    <source>
        <strain>ATCC 204508 / S288c</strain>
    </source>
</reference>
<reference key="2">
    <citation type="journal article" date="2014" name="G3 (Bethesda)">
        <title>The reference genome sequence of Saccharomyces cerevisiae: Then and now.</title>
        <authorList>
            <person name="Engel S.R."/>
            <person name="Dietrich F.S."/>
            <person name="Fisk D.G."/>
            <person name="Binkley G."/>
            <person name="Balakrishnan R."/>
            <person name="Costanzo M.C."/>
            <person name="Dwight S.S."/>
            <person name="Hitz B.C."/>
            <person name="Karra K."/>
            <person name="Nash R.S."/>
            <person name="Weng S."/>
            <person name="Wong E.D."/>
            <person name="Lloyd P."/>
            <person name="Skrzypek M.S."/>
            <person name="Miyasato S.R."/>
            <person name="Simison M."/>
            <person name="Cherry J.M."/>
        </authorList>
    </citation>
    <scope>GENOME REANNOTATION</scope>
    <source>
        <strain>ATCC 204508 / S288c</strain>
    </source>
</reference>
<reference evidence="11" key="3">
    <citation type="journal article" date="1996" name="Cell">
        <title>RSC, an essential, abundant chromatin-remodeling complex.</title>
        <authorList>
            <person name="Cairns B.R."/>
            <person name="Lorch Y."/>
            <person name="Li Y."/>
            <person name="Zhang M."/>
            <person name="Lacomis L."/>
            <person name="Erdjument-Bromage H."/>
            <person name="Tempst P."/>
            <person name="Du J."/>
            <person name="Laurent B.C."/>
            <person name="Kornberg R.D."/>
        </authorList>
    </citation>
    <scope>FUNCTION OF THE RSC COMPLEX</scope>
</reference>
<reference evidence="11" key="4">
    <citation type="journal article" date="1999" name="Cell">
        <title>Histone octamer transfer by a chromatin-remodeling complex.</title>
        <authorList>
            <person name="Lorch Y."/>
            <person name="Zhang M."/>
            <person name="Kornberg R.D."/>
        </authorList>
    </citation>
    <scope>FUNCTION OF THE RSC COMPLEX</scope>
</reference>
<reference evidence="11" key="5">
    <citation type="journal article" date="1999" name="EMBO J.">
        <title>Transcriptional repression of the yeast CHA1 gene requires the chromatin-remodeling complex RSC.</title>
        <authorList>
            <person name="Moreira J.M.A."/>
            <person name="Holmberg S."/>
        </authorList>
    </citation>
    <scope>FUNCTION OF THE RSC COMPLEX</scope>
</reference>
<reference evidence="11" key="6">
    <citation type="journal article" date="1999" name="Mol. Cell">
        <title>Two functionally distinct forms of the RSC nucleosome-remodeling complex, containing essential AT hook, BAH, and bromodomains.</title>
        <authorList>
            <person name="Cairns B.R."/>
            <person name="Schlichter A."/>
            <person name="Erdjument-Bromage H."/>
            <person name="Tempst P."/>
            <person name="Kornberg R.D."/>
            <person name="Winston F."/>
        </authorList>
    </citation>
    <scope>COMPOSITION OF THE RSC COMPLEX</scope>
</reference>
<reference evidence="11" key="7">
    <citation type="journal article" date="2002" name="Genes Dev.">
        <title>Chromatin remodeling by RSC involves ATP-dependent DNA translocation.</title>
        <authorList>
            <person name="Saha A."/>
            <person name="Wittmeyer J."/>
            <person name="Cairns B.R."/>
        </authorList>
    </citation>
    <scope>FUNCTION OF THE RSC COMPLEX</scope>
</reference>
<reference evidence="11" key="8">
    <citation type="journal article" date="2002" name="Genetics">
        <title>Yeast RSC function is required for organization of the cellular cytoskeleton via an alternative PKC1 pathway.</title>
        <authorList>
            <person name="Chai B."/>
            <person name="Hsu J.-M."/>
            <person name="Du J."/>
            <person name="Laurent B.C."/>
        </authorList>
    </citation>
    <scope>FUNCTION OF THE RSC COMPLEX</scope>
</reference>
<reference evidence="11" key="9">
    <citation type="journal article" date="2002" name="Mol. Cell. Biol.">
        <title>Proteomics of the eukaryotic transcription machinery: identification of proteins associated with components of yeast TFIID by multidimensional mass spectrometry.</title>
        <authorList>
            <person name="Sanders S.L."/>
            <person name="Jennings J."/>
            <person name="Canutescu A."/>
            <person name="Link A.J."/>
            <person name="Weil P.A."/>
        </authorList>
    </citation>
    <scope>IDENTIFICATION IN THE RSC COMPLEX</scope>
</reference>
<reference evidence="11" key="10">
    <citation type="journal article" date="2003" name="Mol. Cell. Biol.">
        <title>The yeast RSC chromatin-remodeling complex is required for kinetochore function in chromosome segregation.</title>
        <authorList>
            <person name="Hsu J.-M."/>
            <person name="Huang J."/>
            <person name="Meluh P.B."/>
            <person name="Laurent B.C."/>
        </authorList>
    </citation>
    <scope>FUNCTION OF THE RSC COMPLEX</scope>
    <scope>SUBCELLULAR LOCATION</scope>
    <scope>INTERACTION OF THE RSC COMPLEX WITH HISTONES</scope>
</reference>
<reference key="11">
    <citation type="journal article" date="2003" name="Nature">
        <title>Global analysis of protein expression in yeast.</title>
        <authorList>
            <person name="Ghaemmaghami S."/>
            <person name="Huh W.-K."/>
            <person name="Bower K."/>
            <person name="Howson R.W."/>
            <person name="Belle A."/>
            <person name="Dephoure N."/>
            <person name="O'Shea E.K."/>
            <person name="Weissman J.S."/>
        </authorList>
    </citation>
    <scope>LEVEL OF PROTEIN EXPRESSION [LARGE SCALE ANALYSIS]</scope>
</reference>
<evidence type="ECO:0000255" key="1">
    <source>
        <dbReference type="PROSITE-ProRule" id="PRU00035"/>
    </source>
</evidence>
<evidence type="ECO:0000256" key="2">
    <source>
        <dbReference type="SAM" id="MobiDB-lite"/>
    </source>
</evidence>
<evidence type="ECO:0000269" key="3">
    <source>
    </source>
</evidence>
<evidence type="ECO:0000269" key="4">
    <source>
    </source>
</evidence>
<evidence type="ECO:0000269" key="5">
    <source>
    </source>
</evidence>
<evidence type="ECO:0000269" key="6">
    <source>
    </source>
</evidence>
<evidence type="ECO:0000269" key="7">
    <source>
    </source>
</evidence>
<evidence type="ECO:0000269" key="8">
    <source>
    </source>
</evidence>
<evidence type="ECO:0000269" key="9">
    <source>
    </source>
</evidence>
<evidence type="ECO:0000269" key="10">
    <source>
    </source>
</evidence>
<evidence type="ECO:0000305" key="11"/>
<evidence type="ECO:0007829" key="12">
    <source>
        <dbReference type="PDB" id="6K15"/>
    </source>
</evidence>
<evidence type="ECO:0007829" key="13">
    <source>
        <dbReference type="PDB" id="6V8O"/>
    </source>
</evidence>
<dbReference type="EMBL" id="Z73205">
    <property type="protein sequence ID" value="CAA97557.1"/>
    <property type="molecule type" value="Genomic_DNA"/>
</dbReference>
<dbReference type="EMBL" id="BK006945">
    <property type="protein sequence ID" value="DAA09351.1"/>
    <property type="molecule type" value="Genomic_DNA"/>
</dbReference>
<dbReference type="PIR" id="S64860">
    <property type="entry name" value="S64860"/>
</dbReference>
<dbReference type="RefSeq" id="NP_013133.1">
    <property type="nucleotide sequence ID" value="NM_001181920.1"/>
</dbReference>
<dbReference type="PDB" id="6K15">
    <property type="method" value="EM"/>
    <property type="resolution" value="3.40 A"/>
    <property type="chains" value="A=1-502"/>
</dbReference>
<dbReference type="PDB" id="6KW3">
    <property type="method" value="EM"/>
    <property type="resolution" value="7.13 A"/>
    <property type="chains" value="A=1-502"/>
</dbReference>
<dbReference type="PDB" id="6KW4">
    <property type="method" value="EM"/>
    <property type="resolution" value="7.55 A"/>
    <property type="chains" value="A=1-502"/>
</dbReference>
<dbReference type="PDB" id="6KW5">
    <property type="method" value="EM"/>
    <property type="resolution" value="10.13 A"/>
    <property type="chains" value="A=1-502"/>
</dbReference>
<dbReference type="PDB" id="6TDA">
    <property type="method" value="EM"/>
    <property type="resolution" value="15.00 A"/>
    <property type="chains" value="P=1-502"/>
</dbReference>
<dbReference type="PDB" id="6V8O">
    <property type="method" value="EM"/>
    <property type="resolution" value="3.07 A"/>
    <property type="chains" value="O=1-502"/>
</dbReference>
<dbReference type="PDB" id="6V92">
    <property type="method" value="EM"/>
    <property type="resolution" value="20.00 A"/>
    <property type="chains" value="O=1-502"/>
</dbReference>
<dbReference type="PDBsum" id="6K15"/>
<dbReference type="PDBsum" id="6KW3"/>
<dbReference type="PDBsum" id="6KW4"/>
<dbReference type="PDBsum" id="6KW5"/>
<dbReference type="PDBsum" id="6TDA"/>
<dbReference type="PDBsum" id="6V8O"/>
<dbReference type="PDBsum" id="6V92"/>
<dbReference type="EMDB" id="EMD-0777"/>
<dbReference type="EMDB" id="EMD-0778"/>
<dbReference type="EMDB" id="EMD-0779"/>
<dbReference type="EMDB" id="EMD-10465"/>
<dbReference type="EMDB" id="EMD-21107"/>
<dbReference type="EMDB" id="EMD-21114"/>
<dbReference type="EMDB" id="EMD-9905"/>
<dbReference type="SMR" id="Q07979"/>
<dbReference type="BioGRID" id="31307">
    <property type="interactions" value="281"/>
</dbReference>
<dbReference type="ComplexPortal" id="CPX-1888">
    <property type="entry name" value="RSC chromatin remodelling complex, variant RSC2"/>
</dbReference>
<dbReference type="ComplexPortal" id="CPX-1889">
    <property type="entry name" value="RSC chromatin remodelling complex, variant RSC1"/>
</dbReference>
<dbReference type="DIP" id="DIP-6656N"/>
<dbReference type="FunCoup" id="Q07979">
    <property type="interactions" value="479"/>
</dbReference>
<dbReference type="IntAct" id="Q07979">
    <property type="interactions" value="110"/>
</dbReference>
<dbReference type="MINT" id="Q07979"/>
<dbReference type="STRING" id="4932.YLR033W"/>
<dbReference type="iPTMnet" id="Q07979"/>
<dbReference type="PaxDb" id="4932-YLR033W"/>
<dbReference type="PeptideAtlas" id="Q07979"/>
<dbReference type="EnsemblFungi" id="YLR033W_mRNA">
    <property type="protein sequence ID" value="YLR033W"/>
    <property type="gene ID" value="YLR033W"/>
</dbReference>
<dbReference type="GeneID" id="850720"/>
<dbReference type="KEGG" id="sce:YLR033W"/>
<dbReference type="AGR" id="SGD:S000004023"/>
<dbReference type="SGD" id="S000004023">
    <property type="gene designation" value="RSC58"/>
</dbReference>
<dbReference type="VEuPathDB" id="FungiDB:YLR033W"/>
<dbReference type="eggNOG" id="ENOG502QQT5">
    <property type="taxonomic scope" value="Eukaryota"/>
</dbReference>
<dbReference type="HOGENOM" id="CLU_043834_0_0_1"/>
<dbReference type="InParanoid" id="Q07979"/>
<dbReference type="OMA" id="PNWYSLP"/>
<dbReference type="OrthoDB" id="5354116at2759"/>
<dbReference type="BioCyc" id="YEAST:G3O-32192-MONOMER"/>
<dbReference type="BioGRID-ORCS" id="850720">
    <property type="hits" value="1 hit in 10 CRISPR screens"/>
</dbReference>
<dbReference type="PRO" id="PR:Q07979"/>
<dbReference type="Proteomes" id="UP000002311">
    <property type="component" value="Chromosome XII"/>
</dbReference>
<dbReference type="RNAct" id="Q07979">
    <property type="molecule type" value="protein"/>
</dbReference>
<dbReference type="GO" id="GO:0000785">
    <property type="term" value="C:chromatin"/>
    <property type="evidence" value="ECO:0000303"/>
    <property type="project" value="ComplexPortal"/>
</dbReference>
<dbReference type="GO" id="GO:0005634">
    <property type="term" value="C:nucleus"/>
    <property type="evidence" value="ECO:0000318"/>
    <property type="project" value="GO_Central"/>
</dbReference>
<dbReference type="GO" id="GO:0016586">
    <property type="term" value="C:RSC-type complex"/>
    <property type="evidence" value="ECO:0000314"/>
    <property type="project" value="UniProtKB"/>
</dbReference>
<dbReference type="GO" id="GO:0006338">
    <property type="term" value="P:chromatin remodeling"/>
    <property type="evidence" value="ECO:0000314"/>
    <property type="project" value="UniProtKB"/>
</dbReference>
<dbReference type="GO" id="GO:0006337">
    <property type="term" value="P:nucleosome disassembly"/>
    <property type="evidence" value="ECO:0000314"/>
    <property type="project" value="SGD"/>
</dbReference>
<dbReference type="GO" id="GO:0006357">
    <property type="term" value="P:regulation of transcription by RNA polymerase II"/>
    <property type="evidence" value="ECO:0000318"/>
    <property type="project" value="GO_Central"/>
</dbReference>
<dbReference type="GO" id="GO:0006368">
    <property type="term" value="P:transcription elongation by RNA polymerase II"/>
    <property type="evidence" value="ECO:0000314"/>
    <property type="project" value="SGD"/>
</dbReference>
<dbReference type="Gene3D" id="1.20.920.10">
    <property type="entry name" value="Bromodomain-like"/>
    <property type="match status" value="1"/>
</dbReference>
<dbReference type="InterPro" id="IPR001487">
    <property type="entry name" value="Bromodomain"/>
</dbReference>
<dbReference type="InterPro" id="IPR036427">
    <property type="entry name" value="Bromodomain-like_sf"/>
</dbReference>
<dbReference type="InterPro" id="IPR050720">
    <property type="entry name" value="Engrailed_Homeobox_TFs"/>
</dbReference>
<dbReference type="PANTHER" id="PTHR24341">
    <property type="entry name" value="HOMEOBOX PROTEIN ENGRAILED"/>
    <property type="match status" value="1"/>
</dbReference>
<dbReference type="PANTHER" id="PTHR24341:SF6">
    <property type="entry name" value="HOMEOBOX PROTEIN INVECTED"/>
    <property type="match status" value="1"/>
</dbReference>
<dbReference type="Pfam" id="PF00439">
    <property type="entry name" value="Bromodomain"/>
    <property type="match status" value="1"/>
</dbReference>
<dbReference type="PROSITE" id="PS50014">
    <property type="entry name" value="BROMODOMAIN_2"/>
    <property type="match status" value="1"/>
</dbReference>
<comment type="function">
    <text evidence="3 4 6 7 8 10">Component of the chromatin structure-remodeling complex (RSC), which is involved in transcription regulation and nucleosome positioning. RSC is responsible for the transfer of a histone octamer from a nucleosome core particle to naked DNA. The reaction requires ATP and involves an activated RSC-nucleosome intermediate. Remodeling reaction also involves DNA translocation, DNA twist and conformational change. As a reconfigurer of centromeric and flanking nucleosomes, RSC complex is required both for proper kinetochore function in chromosome segregation and, via a PKC1-dependent signaling pathway, for organization of the cellular cytoskeleton.</text>
</comment>
<comment type="subunit">
    <text evidence="5">Component of the two forms of the RSC complex composed of at least either RSC1 or RSC2, and ARP7, ARP9, LDB7, NPL6, RSC3, RSC30, RSC4, RSC58, RSC6, RSC8, RSC9, SFH1, STH1, HTL1 and probably RTT102. The complexes interact with histone and histone variant components of centromeric chromatin.</text>
</comment>
<comment type="interaction">
    <interactant intactId="EBI-36549">
        <id>Q07979</id>
    </interactant>
    <interactant intactId="EBI-21941">
        <id>P25632</id>
        <label>RSC6</label>
    </interactant>
    <organismsDiffer>false</organismsDiffer>
    <experiments>8</experiments>
</comment>
<comment type="interaction">
    <interactant intactId="EBI-36549">
        <id>Q07979</id>
    </interactant>
    <interactant intactId="EBI-18410">
        <id>P32597</id>
        <label>STH1</label>
    </interactant>
    <organismsDiffer>false</organismsDiffer>
    <experiments>7</experiments>
</comment>
<comment type="subcellular location">
    <subcellularLocation>
        <location evidence="8">Nucleus</location>
    </subcellularLocation>
    <text>Localizes to centromeric and flanking chromatin. Association with these loci is dependent on STH1.</text>
</comment>
<comment type="miscellaneous">
    <text evidence="9">Present with 4460 molecules/cell in log phase SD medium.</text>
</comment>
<gene>
    <name type="primary">RSC58</name>
    <name type="ordered locus">YLR033W</name>
</gene>